<keyword id="KW-0030">Aminoacyl-tRNA synthetase</keyword>
<keyword id="KW-0067">ATP-binding</keyword>
<keyword id="KW-0963">Cytoplasm</keyword>
<keyword id="KW-0436">Ligase</keyword>
<keyword id="KW-0479">Metal-binding</keyword>
<keyword id="KW-0547">Nucleotide-binding</keyword>
<keyword id="KW-0648">Protein biosynthesis</keyword>
<keyword id="KW-0862">Zinc</keyword>
<name>SYC_DEHM1</name>
<organism>
    <name type="scientific">Dehalococcoides mccartyi (strain ATCC BAA-2266 / KCTC 15142 / 195)</name>
    <name type="common">Dehalococcoides ethenogenes (strain 195)</name>
    <dbReference type="NCBI Taxonomy" id="243164"/>
    <lineage>
        <taxon>Bacteria</taxon>
        <taxon>Bacillati</taxon>
        <taxon>Chloroflexota</taxon>
        <taxon>Dehalococcoidia</taxon>
        <taxon>Dehalococcoidales</taxon>
        <taxon>Dehalococcoidaceae</taxon>
        <taxon>Dehalococcoides</taxon>
    </lineage>
</organism>
<proteinExistence type="inferred from homology"/>
<gene>
    <name evidence="1" type="primary">cysS</name>
    <name type="ordered locus">DET0061</name>
</gene>
<protein>
    <recommendedName>
        <fullName evidence="1">Cysteine--tRNA ligase</fullName>
        <ecNumber evidence="1">6.1.1.16</ecNumber>
    </recommendedName>
    <alternativeName>
        <fullName evidence="1">Cysteinyl-tRNA synthetase</fullName>
        <shortName evidence="1">CysRS</shortName>
    </alternativeName>
</protein>
<accession>Q3ZAD5</accession>
<feature type="chain" id="PRO_0000240907" description="Cysteine--tRNA ligase">
    <location>
        <begin position="1"/>
        <end position="458"/>
    </location>
</feature>
<feature type="short sequence motif" description="'HIGH' region">
    <location>
        <begin position="29"/>
        <end position="39"/>
    </location>
</feature>
<feature type="short sequence motif" description="'KMSKS' region">
    <location>
        <begin position="265"/>
        <end position="269"/>
    </location>
</feature>
<feature type="binding site" evidence="1">
    <location>
        <position position="27"/>
    </location>
    <ligand>
        <name>Zn(2+)</name>
        <dbReference type="ChEBI" id="CHEBI:29105"/>
    </ligand>
</feature>
<feature type="binding site" evidence="1">
    <location>
        <position position="207"/>
    </location>
    <ligand>
        <name>Zn(2+)</name>
        <dbReference type="ChEBI" id="CHEBI:29105"/>
    </ligand>
</feature>
<feature type="binding site" evidence="1">
    <location>
        <position position="232"/>
    </location>
    <ligand>
        <name>Zn(2+)</name>
        <dbReference type="ChEBI" id="CHEBI:29105"/>
    </ligand>
</feature>
<feature type="binding site" evidence="1">
    <location>
        <position position="236"/>
    </location>
    <ligand>
        <name>Zn(2+)</name>
        <dbReference type="ChEBI" id="CHEBI:29105"/>
    </ligand>
</feature>
<feature type="binding site" evidence="1">
    <location>
        <position position="268"/>
    </location>
    <ligand>
        <name>ATP</name>
        <dbReference type="ChEBI" id="CHEBI:30616"/>
    </ligand>
</feature>
<comment type="catalytic activity">
    <reaction evidence="1">
        <text>tRNA(Cys) + L-cysteine + ATP = L-cysteinyl-tRNA(Cys) + AMP + diphosphate</text>
        <dbReference type="Rhea" id="RHEA:17773"/>
        <dbReference type="Rhea" id="RHEA-COMP:9661"/>
        <dbReference type="Rhea" id="RHEA-COMP:9679"/>
        <dbReference type="ChEBI" id="CHEBI:30616"/>
        <dbReference type="ChEBI" id="CHEBI:33019"/>
        <dbReference type="ChEBI" id="CHEBI:35235"/>
        <dbReference type="ChEBI" id="CHEBI:78442"/>
        <dbReference type="ChEBI" id="CHEBI:78517"/>
        <dbReference type="ChEBI" id="CHEBI:456215"/>
        <dbReference type="EC" id="6.1.1.16"/>
    </reaction>
</comment>
<comment type="cofactor">
    <cofactor evidence="1">
        <name>Zn(2+)</name>
        <dbReference type="ChEBI" id="CHEBI:29105"/>
    </cofactor>
    <text evidence="1">Binds 1 zinc ion per subunit.</text>
</comment>
<comment type="subunit">
    <text evidence="1">Monomer.</text>
</comment>
<comment type="subcellular location">
    <subcellularLocation>
        <location evidence="1">Cytoplasm</location>
    </subcellularLocation>
</comment>
<comment type="similarity">
    <text evidence="1">Belongs to the class-I aminoacyl-tRNA synthetase family.</text>
</comment>
<sequence>MKIYNTLSGKLEEFVPLEDGKVKMYVCGITPQSEPHIGHAMSYINFDVIRRYLSYKGYRVKYIQNFTDIDDKIIAKANAQGIEPSTLAERNIGVFLDAMAALNITPADYYPRATQEVPKIIEMVSGLIEKGYAYEAGGSVYLRVQKVEGYGKLSHRTLEQMMAGARIEPGEEKEYPMDFALWKATKPGEPSWESPWGLGRPGWHIECSAMSLRYLGEQIDIHGGGQDLIFPHHENEIAQSECFSGVKPFVKYWLHNGLLKLGEEKMSKSLGNLVTIKEALSRYSADALRIFVLSSSYRNPLTYSEEALEAAEKGAERLRQTAARQDNPRLQEINVDVKTYRERFTQYMDNDFNTSAALATIFDLGRELNRIEAEGGKSTQGQELFKELAGILGLSLIIAEPTTSADAAPFIDMLIELRKDLRLAKQYQLADKIRTSLDAAGILLEDSAGGTIWKIKTK</sequence>
<dbReference type="EC" id="6.1.1.16" evidence="1"/>
<dbReference type="EMBL" id="CP000027">
    <property type="protein sequence ID" value="AAW39072.1"/>
    <property type="molecule type" value="Genomic_DNA"/>
</dbReference>
<dbReference type="RefSeq" id="WP_010935869.1">
    <property type="nucleotide sequence ID" value="NC_002936.3"/>
</dbReference>
<dbReference type="SMR" id="Q3ZAD5"/>
<dbReference type="FunCoup" id="Q3ZAD5">
    <property type="interactions" value="274"/>
</dbReference>
<dbReference type="STRING" id="243164.DET0061"/>
<dbReference type="GeneID" id="3229029"/>
<dbReference type="KEGG" id="det:DET0061"/>
<dbReference type="PATRIC" id="fig|243164.10.peg.57"/>
<dbReference type="eggNOG" id="COG0215">
    <property type="taxonomic scope" value="Bacteria"/>
</dbReference>
<dbReference type="HOGENOM" id="CLU_013528_0_1_0"/>
<dbReference type="InParanoid" id="Q3ZAD5"/>
<dbReference type="Proteomes" id="UP000008289">
    <property type="component" value="Chromosome"/>
</dbReference>
<dbReference type="GO" id="GO:0005829">
    <property type="term" value="C:cytosol"/>
    <property type="evidence" value="ECO:0007669"/>
    <property type="project" value="TreeGrafter"/>
</dbReference>
<dbReference type="GO" id="GO:0005524">
    <property type="term" value="F:ATP binding"/>
    <property type="evidence" value="ECO:0007669"/>
    <property type="project" value="UniProtKB-UniRule"/>
</dbReference>
<dbReference type="GO" id="GO:0004817">
    <property type="term" value="F:cysteine-tRNA ligase activity"/>
    <property type="evidence" value="ECO:0007669"/>
    <property type="project" value="UniProtKB-UniRule"/>
</dbReference>
<dbReference type="GO" id="GO:0008270">
    <property type="term" value="F:zinc ion binding"/>
    <property type="evidence" value="ECO:0007669"/>
    <property type="project" value="UniProtKB-UniRule"/>
</dbReference>
<dbReference type="GO" id="GO:0006423">
    <property type="term" value="P:cysteinyl-tRNA aminoacylation"/>
    <property type="evidence" value="ECO:0007669"/>
    <property type="project" value="UniProtKB-UniRule"/>
</dbReference>
<dbReference type="CDD" id="cd00672">
    <property type="entry name" value="CysRS_core"/>
    <property type="match status" value="1"/>
</dbReference>
<dbReference type="FunFam" id="3.40.50.620:FF:000009">
    <property type="entry name" value="Cysteine--tRNA ligase"/>
    <property type="match status" value="1"/>
</dbReference>
<dbReference type="Gene3D" id="1.20.120.1910">
    <property type="entry name" value="Cysteine-tRNA ligase, C-terminal anti-codon recognition domain"/>
    <property type="match status" value="1"/>
</dbReference>
<dbReference type="Gene3D" id="3.40.50.620">
    <property type="entry name" value="HUPs"/>
    <property type="match status" value="1"/>
</dbReference>
<dbReference type="HAMAP" id="MF_00041">
    <property type="entry name" value="Cys_tRNA_synth"/>
    <property type="match status" value="1"/>
</dbReference>
<dbReference type="InterPro" id="IPR015803">
    <property type="entry name" value="Cys-tRNA-ligase"/>
</dbReference>
<dbReference type="InterPro" id="IPR015273">
    <property type="entry name" value="Cys-tRNA-synt_Ia_DALR"/>
</dbReference>
<dbReference type="InterPro" id="IPR024909">
    <property type="entry name" value="Cys-tRNA/MSH_ligase"/>
</dbReference>
<dbReference type="InterPro" id="IPR014729">
    <property type="entry name" value="Rossmann-like_a/b/a_fold"/>
</dbReference>
<dbReference type="InterPro" id="IPR032678">
    <property type="entry name" value="tRNA-synt_1_cat_dom"/>
</dbReference>
<dbReference type="InterPro" id="IPR009080">
    <property type="entry name" value="tRNAsynth_Ia_anticodon-bd"/>
</dbReference>
<dbReference type="NCBIfam" id="TIGR00435">
    <property type="entry name" value="cysS"/>
    <property type="match status" value="1"/>
</dbReference>
<dbReference type="PANTHER" id="PTHR10890:SF3">
    <property type="entry name" value="CYSTEINE--TRNA LIGASE, CYTOPLASMIC"/>
    <property type="match status" value="1"/>
</dbReference>
<dbReference type="PANTHER" id="PTHR10890">
    <property type="entry name" value="CYSTEINYL-TRNA SYNTHETASE"/>
    <property type="match status" value="1"/>
</dbReference>
<dbReference type="Pfam" id="PF09190">
    <property type="entry name" value="DALR_2"/>
    <property type="match status" value="1"/>
</dbReference>
<dbReference type="Pfam" id="PF01406">
    <property type="entry name" value="tRNA-synt_1e"/>
    <property type="match status" value="1"/>
</dbReference>
<dbReference type="PRINTS" id="PR00983">
    <property type="entry name" value="TRNASYNTHCYS"/>
</dbReference>
<dbReference type="SMART" id="SM00840">
    <property type="entry name" value="DALR_2"/>
    <property type="match status" value="1"/>
</dbReference>
<dbReference type="SUPFAM" id="SSF47323">
    <property type="entry name" value="Anticodon-binding domain of a subclass of class I aminoacyl-tRNA synthetases"/>
    <property type="match status" value="1"/>
</dbReference>
<dbReference type="SUPFAM" id="SSF52374">
    <property type="entry name" value="Nucleotidylyl transferase"/>
    <property type="match status" value="1"/>
</dbReference>
<reference key="1">
    <citation type="journal article" date="2005" name="Science">
        <title>Genome sequence of the PCE-dechlorinating bacterium Dehalococcoides ethenogenes.</title>
        <authorList>
            <person name="Seshadri R."/>
            <person name="Adrian L."/>
            <person name="Fouts D.E."/>
            <person name="Eisen J.A."/>
            <person name="Phillippy A.M."/>
            <person name="Methe B.A."/>
            <person name="Ward N.L."/>
            <person name="Nelson W.C."/>
            <person name="DeBoy R.T."/>
            <person name="Khouri H.M."/>
            <person name="Kolonay J.F."/>
            <person name="Dodson R.J."/>
            <person name="Daugherty S.C."/>
            <person name="Brinkac L.M."/>
            <person name="Sullivan S.A."/>
            <person name="Madupu R."/>
            <person name="Nelson K.E."/>
            <person name="Kang K.H."/>
            <person name="Impraim M."/>
            <person name="Tran K."/>
            <person name="Robinson J.M."/>
            <person name="Forberger H.A."/>
            <person name="Fraser C.M."/>
            <person name="Zinder S.H."/>
            <person name="Heidelberg J.F."/>
        </authorList>
    </citation>
    <scope>NUCLEOTIDE SEQUENCE [LARGE SCALE GENOMIC DNA]</scope>
    <source>
        <strain>ATCC BAA-2266 / KCTC 15142 / 195</strain>
    </source>
</reference>
<evidence type="ECO:0000255" key="1">
    <source>
        <dbReference type="HAMAP-Rule" id="MF_00041"/>
    </source>
</evidence>